<proteinExistence type="inferred from homology"/>
<reference key="1">
    <citation type="journal article" date="2003" name="Proc. Natl. Acad. Sci. U.S.A.">
        <title>Complete genome sequence and analysis of Wolinella succinogenes.</title>
        <authorList>
            <person name="Baar C."/>
            <person name="Eppinger M."/>
            <person name="Raddatz G."/>
            <person name="Simon J."/>
            <person name="Lanz C."/>
            <person name="Klimmek O."/>
            <person name="Nandakumar R."/>
            <person name="Gross R."/>
            <person name="Rosinus A."/>
            <person name="Keller H."/>
            <person name="Jagtap P."/>
            <person name="Linke B."/>
            <person name="Meyer F."/>
            <person name="Lederer H."/>
            <person name="Schuster S.C."/>
        </authorList>
    </citation>
    <scope>NUCLEOTIDE SEQUENCE [LARGE SCALE GENOMIC DNA]</scope>
    <source>
        <strain>ATCC 29543 / DSM 1740 / CCUG 13145 / JCM 31913 / LMG 7466 / NCTC 11488 / FDC 602W</strain>
    </source>
</reference>
<keyword id="KW-0274">FAD</keyword>
<keyword id="KW-0285">Flavoprotein</keyword>
<keyword id="KW-0489">Methyltransferase</keyword>
<keyword id="KW-0521">NADP</keyword>
<keyword id="KW-0545">Nucleotide biosynthesis</keyword>
<keyword id="KW-1185">Reference proteome</keyword>
<keyword id="KW-0808">Transferase</keyword>
<gene>
    <name evidence="1" type="primary">thyX</name>
    <name type="ordered locus">WS2228</name>
</gene>
<organism>
    <name type="scientific">Wolinella succinogenes (strain ATCC 29543 / DSM 1740 / CCUG 13145 / JCM 31913 / LMG 7466 / NCTC 11488 / FDC 602W)</name>
    <name type="common">Vibrio succinogenes</name>
    <dbReference type="NCBI Taxonomy" id="273121"/>
    <lineage>
        <taxon>Bacteria</taxon>
        <taxon>Pseudomonadati</taxon>
        <taxon>Campylobacterota</taxon>
        <taxon>Epsilonproteobacteria</taxon>
        <taxon>Campylobacterales</taxon>
        <taxon>Helicobacteraceae</taxon>
        <taxon>Wolinella</taxon>
    </lineage>
</organism>
<feature type="chain" id="PRO_0000175587" description="Flavin-dependent thymidylate synthase">
    <location>
        <begin position="1"/>
        <end position="204"/>
    </location>
</feature>
<feature type="domain" description="ThyX" evidence="2">
    <location>
        <begin position="1"/>
        <end position="204"/>
    </location>
</feature>
<feature type="short sequence motif" description="ThyX motif" evidence="1">
    <location>
        <begin position="74"/>
        <end position="84"/>
    </location>
</feature>
<feature type="active site" description="Involved in ionization of N3 of dUMP, leading to its activation" evidence="1">
    <location>
        <position position="170"/>
    </location>
</feature>
<feature type="binding site" evidence="1">
    <location>
        <position position="50"/>
    </location>
    <ligand>
        <name>FAD</name>
        <dbReference type="ChEBI" id="CHEBI:57692"/>
        <note>ligand shared between neighboring subunits</note>
    </ligand>
</feature>
<feature type="binding site" evidence="1">
    <location>
        <begin position="71"/>
        <end position="74"/>
    </location>
    <ligand>
        <name>dUMP</name>
        <dbReference type="ChEBI" id="CHEBI:246422"/>
        <note>ligand shared between dimeric partners</note>
    </ligand>
</feature>
<feature type="binding site" evidence="1">
    <location>
        <begin position="74"/>
        <end position="76"/>
    </location>
    <ligand>
        <name>FAD</name>
        <dbReference type="ChEBI" id="CHEBI:57692"/>
        <note>ligand shared between neighboring subunits</note>
    </ligand>
</feature>
<feature type="binding site" description="in other chain" evidence="1">
    <location>
        <begin position="84"/>
        <end position="86"/>
    </location>
    <ligand>
        <name>dUMP</name>
        <dbReference type="ChEBI" id="CHEBI:246422"/>
        <note>ligand shared between dimeric partners</note>
    </ligand>
</feature>
<feature type="binding site" description="in other chain" evidence="1">
    <location>
        <position position="143"/>
    </location>
    <ligand>
        <name>dUMP</name>
        <dbReference type="ChEBI" id="CHEBI:246422"/>
        <note>ligand shared between dimeric partners</note>
    </ligand>
</feature>
<feature type="binding site" evidence="1">
    <location>
        <begin position="159"/>
        <end position="161"/>
    </location>
    <ligand>
        <name>FAD</name>
        <dbReference type="ChEBI" id="CHEBI:57692"/>
        <note>ligand shared between neighboring subunits</note>
    </ligand>
</feature>
<feature type="binding site" evidence="1">
    <location>
        <position position="165"/>
    </location>
    <ligand>
        <name>FAD</name>
        <dbReference type="ChEBI" id="CHEBI:57692"/>
        <note>ligand shared between neighboring subunits</note>
    </ligand>
</feature>
<feature type="binding site" evidence="1">
    <location>
        <position position="170"/>
    </location>
    <ligand>
        <name>dUMP</name>
        <dbReference type="ChEBI" id="CHEBI:246422"/>
        <note>ligand shared between dimeric partners</note>
    </ligand>
</feature>
<evidence type="ECO:0000255" key="1">
    <source>
        <dbReference type="HAMAP-Rule" id="MF_01408"/>
    </source>
</evidence>
<evidence type="ECO:0000255" key="2">
    <source>
        <dbReference type="PROSITE-ProRule" id="PRU00661"/>
    </source>
</evidence>
<dbReference type="EC" id="2.1.1.148" evidence="1"/>
<dbReference type="EMBL" id="BX571663">
    <property type="protein sequence ID" value="CAE11216.1"/>
    <property type="molecule type" value="Genomic_DNA"/>
</dbReference>
<dbReference type="RefSeq" id="WP_011139998.1">
    <property type="nucleotide sequence ID" value="NC_005090.1"/>
</dbReference>
<dbReference type="SMR" id="Q7MQK8"/>
<dbReference type="STRING" id="273121.WS2228"/>
<dbReference type="KEGG" id="wsu:WS2228"/>
<dbReference type="eggNOG" id="COG1351">
    <property type="taxonomic scope" value="Bacteria"/>
</dbReference>
<dbReference type="HOGENOM" id="CLU_077585_2_0_7"/>
<dbReference type="UniPathway" id="UPA00575"/>
<dbReference type="Proteomes" id="UP000000422">
    <property type="component" value="Chromosome"/>
</dbReference>
<dbReference type="GO" id="GO:0050660">
    <property type="term" value="F:flavin adenine dinucleotide binding"/>
    <property type="evidence" value="ECO:0007669"/>
    <property type="project" value="InterPro"/>
</dbReference>
<dbReference type="GO" id="GO:0070402">
    <property type="term" value="F:NADPH binding"/>
    <property type="evidence" value="ECO:0007669"/>
    <property type="project" value="TreeGrafter"/>
</dbReference>
<dbReference type="GO" id="GO:0050797">
    <property type="term" value="F:thymidylate synthase (FAD) activity"/>
    <property type="evidence" value="ECO:0007669"/>
    <property type="project" value="UniProtKB-UniRule"/>
</dbReference>
<dbReference type="GO" id="GO:0004799">
    <property type="term" value="F:thymidylate synthase activity"/>
    <property type="evidence" value="ECO:0007669"/>
    <property type="project" value="TreeGrafter"/>
</dbReference>
<dbReference type="GO" id="GO:0006231">
    <property type="term" value="P:dTMP biosynthetic process"/>
    <property type="evidence" value="ECO:0007669"/>
    <property type="project" value="UniProtKB-UniRule"/>
</dbReference>
<dbReference type="GO" id="GO:0006235">
    <property type="term" value="P:dTTP biosynthetic process"/>
    <property type="evidence" value="ECO:0007669"/>
    <property type="project" value="UniProtKB-UniRule"/>
</dbReference>
<dbReference type="GO" id="GO:0032259">
    <property type="term" value="P:methylation"/>
    <property type="evidence" value="ECO:0007669"/>
    <property type="project" value="UniProtKB-KW"/>
</dbReference>
<dbReference type="CDD" id="cd20175">
    <property type="entry name" value="ThyX"/>
    <property type="match status" value="1"/>
</dbReference>
<dbReference type="Gene3D" id="3.30.1360.170">
    <property type="match status" value="1"/>
</dbReference>
<dbReference type="HAMAP" id="MF_01408">
    <property type="entry name" value="ThyX"/>
    <property type="match status" value="1"/>
</dbReference>
<dbReference type="InterPro" id="IPR003669">
    <property type="entry name" value="Thymidylate_synthase_ThyX"/>
</dbReference>
<dbReference type="InterPro" id="IPR036098">
    <property type="entry name" value="Thymidylate_synthase_ThyX_sf"/>
</dbReference>
<dbReference type="NCBIfam" id="TIGR02170">
    <property type="entry name" value="thyX"/>
    <property type="match status" value="1"/>
</dbReference>
<dbReference type="PANTHER" id="PTHR34934">
    <property type="entry name" value="FLAVIN-DEPENDENT THYMIDYLATE SYNTHASE"/>
    <property type="match status" value="1"/>
</dbReference>
<dbReference type="PANTHER" id="PTHR34934:SF1">
    <property type="entry name" value="FLAVIN-DEPENDENT THYMIDYLATE SYNTHASE"/>
    <property type="match status" value="1"/>
</dbReference>
<dbReference type="Pfam" id="PF02511">
    <property type="entry name" value="Thy1"/>
    <property type="match status" value="1"/>
</dbReference>
<dbReference type="SUPFAM" id="SSF69796">
    <property type="entry name" value="Thymidylate synthase-complementing protein Thy1"/>
    <property type="match status" value="1"/>
</dbReference>
<dbReference type="PROSITE" id="PS51331">
    <property type="entry name" value="THYX"/>
    <property type="match status" value="1"/>
</dbReference>
<protein>
    <recommendedName>
        <fullName evidence="1">Flavin-dependent thymidylate synthase</fullName>
        <shortName evidence="1">FDTS</shortName>
        <ecNumber evidence="1">2.1.1.148</ecNumber>
    </recommendedName>
    <alternativeName>
        <fullName evidence="1">FAD-dependent thymidylate synthase</fullName>
    </alternativeName>
    <alternativeName>
        <fullName evidence="1">Thymidylate synthase ThyX</fullName>
        <shortName evidence="1">TS</shortName>
        <shortName evidence="1">TSase</shortName>
    </alternativeName>
</protein>
<accession>Q7MQK8</accession>
<sequence>MTVTLMQHTSLTICAHAIRTCWQSFEKSDGGGEKDRELIDRVGNKNKHASTLEHLVYTFYIQGISRACLQELARHRIASLSVKSSRYTLKELKAEEEFKEGDWERAKRYLVETESEAVNLASLKALENLRQVLLLGISNDMAKYCLPESYKTELTWTINARALQNFLTLRSSKSALWEIRKLAKTLHEALPKEHRYLFCLNQEG</sequence>
<name>THYX_WOLSU</name>
<comment type="function">
    <text evidence="1">Catalyzes the reductive methylation of 2'-deoxyuridine-5'-monophosphate (dUMP) to 2'-deoxythymidine-5'-monophosphate (dTMP) while utilizing 5,10-methylenetetrahydrofolate (mTHF) as the methyl donor, and NADPH and FADH(2) as the reductant.</text>
</comment>
<comment type="catalytic activity">
    <reaction evidence="1">
        <text>dUMP + (6R)-5,10-methylene-5,6,7,8-tetrahydrofolate + NADPH + H(+) = dTMP + (6S)-5,6,7,8-tetrahydrofolate + NADP(+)</text>
        <dbReference type="Rhea" id="RHEA:29043"/>
        <dbReference type="ChEBI" id="CHEBI:15378"/>
        <dbReference type="ChEBI" id="CHEBI:15636"/>
        <dbReference type="ChEBI" id="CHEBI:57453"/>
        <dbReference type="ChEBI" id="CHEBI:57783"/>
        <dbReference type="ChEBI" id="CHEBI:58349"/>
        <dbReference type="ChEBI" id="CHEBI:63528"/>
        <dbReference type="ChEBI" id="CHEBI:246422"/>
        <dbReference type="EC" id="2.1.1.148"/>
    </reaction>
</comment>
<comment type="cofactor">
    <cofactor evidence="1">
        <name>FAD</name>
        <dbReference type="ChEBI" id="CHEBI:57692"/>
    </cofactor>
    <text evidence="1">Binds 4 FAD per tetramer. Each FAD binding site is formed by three monomers.</text>
</comment>
<comment type="pathway">
    <text evidence="1">Pyrimidine metabolism; dTTP biosynthesis.</text>
</comment>
<comment type="subunit">
    <text evidence="1">Homotetramer.</text>
</comment>
<comment type="similarity">
    <text evidence="1">Belongs to the thymidylate synthase ThyX family.</text>
</comment>